<sequence>MAAATAADVAEDTASVYSGKLTLYVFLTCGVAATGGLIIGYDIGISGGVTSMDTFLGKFFPSVLHQEQTAQGTSQYCKFNSQPLTAFTSSLYLAALVASFFVASFTRALGRKWSMFGGGVSFLAGATLNGAARNVAMLIVGRILLGIGVAFCGLSTPIYLSEMAPPRLRGMLNIGLQLMITVGIFSANLVNYGAAKIRGGWGWRVSLGLAAAPACVIAVGSLFLPDSPSSLINRGRHEQARRVLRRIRGTDEVDDEYGDLVAAASEIEVYSGCSARRRPWRDVLQRRYRPQLAMAVLIPFFQQLTGINVIMFYAPVLFKTIGLGGDASLMSAVITGLVNIVATFVSIATVDSLGRRKLLFQGGCQMLVSQVIIGTLIGVVFGTSGDGNISRALAVCIVVFICVYVAGFAWSWGPLGVLLPSEIFPLEVRPAGQSISVAVNMLCTFAVAEAFLPMLCHMRFGLFYFFSGWVLVMTLFVSAFLPETKGVPIEKMTVVWRTHWFWGRFYCNQDADAHVQVANSKV</sequence>
<organism>
    <name type="scientific">Oryza sativa subsp. japonica</name>
    <name type="common">Rice</name>
    <dbReference type="NCBI Taxonomy" id="39947"/>
    <lineage>
        <taxon>Eukaryota</taxon>
        <taxon>Viridiplantae</taxon>
        <taxon>Streptophyta</taxon>
        <taxon>Embryophyta</taxon>
        <taxon>Tracheophyta</taxon>
        <taxon>Spermatophyta</taxon>
        <taxon>Magnoliopsida</taxon>
        <taxon>Liliopsida</taxon>
        <taxon>Poales</taxon>
        <taxon>Poaceae</taxon>
        <taxon>BOP clade</taxon>
        <taxon>Oryzoideae</taxon>
        <taxon>Oryzeae</taxon>
        <taxon>Oryzinae</taxon>
        <taxon>Oryza</taxon>
        <taxon>Oryza sativa</taxon>
    </lineage>
</organism>
<reference key="1">
    <citation type="journal article" date="2000" name="Plant Cell Physiol.">
        <title>Characterization and expression of monosaccharide transporters (osMSTs) in rice.</title>
        <authorList>
            <person name="Toyofuku K."/>
            <person name="Kasahara M."/>
            <person name="Yamaguchi J."/>
        </authorList>
    </citation>
    <scope>NUCLEOTIDE SEQUENCE [MRNA]</scope>
    <scope>FUNCTION</scope>
</reference>
<reference key="2">
    <citation type="journal article" date="2005" name="Genome Res.">
        <title>Sequence, annotation, and analysis of synteny between rice chromosome 3 and diverged grass species.</title>
        <authorList>
            <consortium name="The rice chromosome 3 sequencing consortium"/>
            <person name="Buell C.R."/>
            <person name="Yuan Q."/>
            <person name="Ouyang S."/>
            <person name="Liu J."/>
            <person name="Zhu W."/>
            <person name="Wang A."/>
            <person name="Maiti R."/>
            <person name="Haas B."/>
            <person name="Wortman J."/>
            <person name="Pertea M."/>
            <person name="Jones K.M."/>
            <person name="Kim M."/>
            <person name="Overton L."/>
            <person name="Tsitrin T."/>
            <person name="Fadrosh D."/>
            <person name="Bera J."/>
            <person name="Weaver B."/>
            <person name="Jin S."/>
            <person name="Johri S."/>
            <person name="Reardon M."/>
            <person name="Webb K."/>
            <person name="Hill J."/>
            <person name="Moffat K."/>
            <person name="Tallon L."/>
            <person name="Van Aken S."/>
            <person name="Lewis M."/>
            <person name="Utterback T."/>
            <person name="Feldblyum T."/>
            <person name="Zismann V."/>
            <person name="Iobst S."/>
            <person name="Hsiao J."/>
            <person name="de Vazeille A.R."/>
            <person name="Salzberg S.L."/>
            <person name="White O."/>
            <person name="Fraser C.M."/>
            <person name="Yu Y."/>
            <person name="Kim H."/>
            <person name="Rambo T."/>
            <person name="Currie J."/>
            <person name="Collura K."/>
            <person name="Kernodle-Thompson S."/>
            <person name="Wei F."/>
            <person name="Kudrna K."/>
            <person name="Ammiraju J.S.S."/>
            <person name="Luo M."/>
            <person name="Goicoechea J.L."/>
            <person name="Wing R.A."/>
            <person name="Henry D."/>
            <person name="Oates R."/>
            <person name="Palmer M."/>
            <person name="Pries G."/>
            <person name="Saski C."/>
            <person name="Simmons J."/>
            <person name="Soderlund C."/>
            <person name="Nelson W."/>
            <person name="de la Bastide M."/>
            <person name="Spiegel L."/>
            <person name="Nascimento L."/>
            <person name="Huang E."/>
            <person name="Preston R."/>
            <person name="Zutavern T."/>
            <person name="Palmer L."/>
            <person name="O'Shaughnessy A."/>
            <person name="Dike S."/>
            <person name="McCombie W.R."/>
            <person name="Minx P."/>
            <person name="Cordum H."/>
            <person name="Wilson R."/>
            <person name="Jin W."/>
            <person name="Lee H.R."/>
            <person name="Jiang J."/>
            <person name="Jackson S."/>
        </authorList>
    </citation>
    <scope>NUCLEOTIDE SEQUENCE [LARGE SCALE GENOMIC DNA]</scope>
    <source>
        <strain>cv. Nipponbare</strain>
    </source>
</reference>
<reference key="3">
    <citation type="journal article" date="2005" name="Nature">
        <title>The map-based sequence of the rice genome.</title>
        <authorList>
            <consortium name="International rice genome sequencing project (IRGSP)"/>
        </authorList>
    </citation>
    <scope>NUCLEOTIDE SEQUENCE [LARGE SCALE GENOMIC DNA]</scope>
    <source>
        <strain>cv. Nipponbare</strain>
    </source>
</reference>
<reference key="4">
    <citation type="journal article" date="2008" name="Nucleic Acids Res.">
        <title>The rice annotation project database (RAP-DB): 2008 update.</title>
        <authorList>
            <consortium name="The rice annotation project (RAP)"/>
        </authorList>
    </citation>
    <scope>GENOME REANNOTATION</scope>
    <source>
        <strain>cv. Nipponbare</strain>
    </source>
</reference>
<reference key="5">
    <citation type="journal article" date="2013" name="Rice">
        <title>Improvement of the Oryza sativa Nipponbare reference genome using next generation sequence and optical map data.</title>
        <authorList>
            <person name="Kawahara Y."/>
            <person name="de la Bastide M."/>
            <person name="Hamilton J.P."/>
            <person name="Kanamori H."/>
            <person name="McCombie W.R."/>
            <person name="Ouyang S."/>
            <person name="Schwartz D.C."/>
            <person name="Tanaka T."/>
            <person name="Wu J."/>
            <person name="Zhou S."/>
            <person name="Childs K.L."/>
            <person name="Davidson R.M."/>
            <person name="Lin H."/>
            <person name="Quesada-Ocampo L."/>
            <person name="Vaillancourt B."/>
            <person name="Sakai H."/>
            <person name="Lee S.S."/>
            <person name="Kim J."/>
            <person name="Numa H."/>
            <person name="Itoh T."/>
            <person name="Buell C.R."/>
            <person name="Matsumoto T."/>
        </authorList>
    </citation>
    <scope>GENOME REANNOTATION</scope>
    <source>
        <strain>cv. Nipponbare</strain>
    </source>
</reference>
<reference key="6">
    <citation type="journal article" date="2005" name="PLoS Biol.">
        <title>The genomes of Oryza sativa: a history of duplications.</title>
        <authorList>
            <person name="Yu J."/>
            <person name="Wang J."/>
            <person name="Lin W."/>
            <person name="Li S."/>
            <person name="Li H."/>
            <person name="Zhou J."/>
            <person name="Ni P."/>
            <person name="Dong W."/>
            <person name="Hu S."/>
            <person name="Zeng C."/>
            <person name="Zhang J."/>
            <person name="Zhang Y."/>
            <person name="Li R."/>
            <person name="Xu Z."/>
            <person name="Li S."/>
            <person name="Li X."/>
            <person name="Zheng H."/>
            <person name="Cong L."/>
            <person name="Lin L."/>
            <person name="Yin J."/>
            <person name="Geng J."/>
            <person name="Li G."/>
            <person name="Shi J."/>
            <person name="Liu J."/>
            <person name="Lv H."/>
            <person name="Li J."/>
            <person name="Wang J."/>
            <person name="Deng Y."/>
            <person name="Ran L."/>
            <person name="Shi X."/>
            <person name="Wang X."/>
            <person name="Wu Q."/>
            <person name="Li C."/>
            <person name="Ren X."/>
            <person name="Wang J."/>
            <person name="Wang X."/>
            <person name="Li D."/>
            <person name="Liu D."/>
            <person name="Zhang X."/>
            <person name="Ji Z."/>
            <person name="Zhao W."/>
            <person name="Sun Y."/>
            <person name="Zhang Z."/>
            <person name="Bao J."/>
            <person name="Han Y."/>
            <person name="Dong L."/>
            <person name="Ji J."/>
            <person name="Chen P."/>
            <person name="Wu S."/>
            <person name="Liu J."/>
            <person name="Xiao Y."/>
            <person name="Bu D."/>
            <person name="Tan J."/>
            <person name="Yang L."/>
            <person name="Ye C."/>
            <person name="Zhang J."/>
            <person name="Xu J."/>
            <person name="Zhou Y."/>
            <person name="Yu Y."/>
            <person name="Zhang B."/>
            <person name="Zhuang S."/>
            <person name="Wei H."/>
            <person name="Liu B."/>
            <person name="Lei M."/>
            <person name="Yu H."/>
            <person name="Li Y."/>
            <person name="Xu H."/>
            <person name="Wei S."/>
            <person name="He X."/>
            <person name="Fang L."/>
            <person name="Zhang Z."/>
            <person name="Zhang Y."/>
            <person name="Huang X."/>
            <person name="Su Z."/>
            <person name="Tong W."/>
            <person name="Li J."/>
            <person name="Tong Z."/>
            <person name="Li S."/>
            <person name="Ye J."/>
            <person name="Wang L."/>
            <person name="Fang L."/>
            <person name="Lei T."/>
            <person name="Chen C.-S."/>
            <person name="Chen H.-C."/>
            <person name="Xu Z."/>
            <person name="Li H."/>
            <person name="Huang H."/>
            <person name="Zhang F."/>
            <person name="Xu H."/>
            <person name="Li N."/>
            <person name="Zhao C."/>
            <person name="Li S."/>
            <person name="Dong L."/>
            <person name="Huang Y."/>
            <person name="Li L."/>
            <person name="Xi Y."/>
            <person name="Qi Q."/>
            <person name="Li W."/>
            <person name="Zhang B."/>
            <person name="Hu W."/>
            <person name="Zhang Y."/>
            <person name="Tian X."/>
            <person name="Jiao Y."/>
            <person name="Liang X."/>
            <person name="Jin J."/>
            <person name="Gao L."/>
            <person name="Zheng W."/>
            <person name="Hao B."/>
            <person name="Liu S.-M."/>
            <person name="Wang W."/>
            <person name="Yuan L."/>
            <person name="Cao M."/>
            <person name="McDermott J."/>
            <person name="Samudrala R."/>
            <person name="Wang J."/>
            <person name="Wong G.K.-S."/>
            <person name="Yang H."/>
        </authorList>
    </citation>
    <scope>NUCLEOTIDE SEQUENCE [LARGE SCALE GENOMIC DNA]</scope>
    <source>
        <strain>cv. Nipponbare</strain>
    </source>
</reference>
<reference key="7">
    <citation type="journal article" date="2003" name="Science">
        <title>Collection, mapping, and annotation of over 28,000 cDNA clones from japonica rice.</title>
        <authorList>
            <consortium name="The rice full-length cDNA consortium"/>
        </authorList>
    </citation>
    <scope>NUCLEOTIDE SEQUENCE [LARGE SCALE MRNA]</scope>
    <source>
        <strain>cv. Nipponbare</strain>
    </source>
</reference>
<accession>Q851G4</accession>
<accession>Q9FRT6</accession>
<name>MST2_ORYSJ</name>
<evidence type="ECO:0000255" key="1"/>
<evidence type="ECO:0000269" key="2">
    <source>
    </source>
</evidence>
<evidence type="ECO:0000303" key="3">
    <source>
    </source>
</evidence>
<evidence type="ECO:0000305" key="4"/>
<evidence type="ECO:0000312" key="5">
    <source>
        <dbReference type="EMBL" id="AAO38012.1"/>
    </source>
</evidence>
<evidence type="ECO:0000312" key="6">
    <source>
        <dbReference type="EMBL" id="ABF97425.1"/>
    </source>
</evidence>
<evidence type="ECO:0000312" key="7">
    <source>
        <dbReference type="EMBL" id="BAF12506.1"/>
    </source>
</evidence>
<evidence type="ECO:0000312" key="8">
    <source>
        <dbReference type="EMBL" id="EAZ27671.1"/>
    </source>
</evidence>
<protein>
    <recommendedName>
        <fullName evidence="4">Sugar transport protein MST2</fullName>
    </recommendedName>
    <alternativeName>
        <fullName evidence="3">Monosaccharide transporter 2</fullName>
        <shortName evidence="3">OsMST2</shortName>
    </alternativeName>
    <alternativeName>
        <fullName evidence="4">Sugar:proton symporter MST2</fullName>
    </alternativeName>
</protein>
<dbReference type="EMBL" id="AB052884">
    <property type="protein sequence ID" value="BAB19863.1"/>
    <property type="molecule type" value="mRNA"/>
</dbReference>
<dbReference type="EMBL" id="AC120537">
    <property type="protein sequence ID" value="AAO38012.1"/>
    <property type="molecule type" value="Genomic_DNA"/>
</dbReference>
<dbReference type="EMBL" id="DP000009">
    <property type="protein sequence ID" value="ABF97425.1"/>
    <property type="molecule type" value="Genomic_DNA"/>
</dbReference>
<dbReference type="EMBL" id="AP008209">
    <property type="protein sequence ID" value="BAF12506.1"/>
    <property type="molecule type" value="Genomic_DNA"/>
</dbReference>
<dbReference type="EMBL" id="AP014959">
    <property type="protein sequence ID" value="BAS85147.1"/>
    <property type="molecule type" value="Genomic_DNA"/>
</dbReference>
<dbReference type="EMBL" id="CM000140">
    <property type="protein sequence ID" value="EAZ27671.1"/>
    <property type="molecule type" value="Genomic_DNA"/>
</dbReference>
<dbReference type="EMBL" id="AK071180">
    <property type="protein sequence ID" value="BAG92357.1"/>
    <property type="molecule type" value="mRNA"/>
</dbReference>
<dbReference type="SMR" id="Q851G4"/>
<dbReference type="FunCoup" id="Q851G4">
    <property type="interactions" value="107"/>
</dbReference>
<dbReference type="STRING" id="39947.Q851G4"/>
<dbReference type="PaxDb" id="39947-Q851G4"/>
<dbReference type="EnsemblPlants" id="Os03t0594400-01">
    <property type="protein sequence ID" value="Os03t0594400-01"/>
    <property type="gene ID" value="Os03g0594400"/>
</dbReference>
<dbReference type="Gramene" id="Os03t0594400-01">
    <property type="protein sequence ID" value="Os03t0594400-01"/>
    <property type="gene ID" value="Os03g0594400"/>
</dbReference>
<dbReference type="KEGG" id="dosa:Os03g0594400"/>
<dbReference type="KEGG" id="osa:4333366"/>
<dbReference type="eggNOG" id="KOG0254">
    <property type="taxonomic scope" value="Eukaryota"/>
</dbReference>
<dbReference type="HOGENOM" id="CLU_001265_30_5_1"/>
<dbReference type="InParanoid" id="Q851G4"/>
<dbReference type="OMA" id="VYRKEQT"/>
<dbReference type="OrthoDB" id="4142200at2759"/>
<dbReference type="Proteomes" id="UP000000763">
    <property type="component" value="Chromosome 3"/>
</dbReference>
<dbReference type="Proteomes" id="UP000007752">
    <property type="component" value="Chromosome 3"/>
</dbReference>
<dbReference type="Proteomes" id="UP000059680">
    <property type="component" value="Chromosome 3"/>
</dbReference>
<dbReference type="GO" id="GO:0016020">
    <property type="term" value="C:membrane"/>
    <property type="evidence" value="ECO:0007669"/>
    <property type="project" value="UniProtKB-SubCell"/>
</dbReference>
<dbReference type="GO" id="GO:0015145">
    <property type="term" value="F:monosaccharide transmembrane transporter activity"/>
    <property type="evidence" value="ECO:0007669"/>
    <property type="project" value="InterPro"/>
</dbReference>
<dbReference type="GO" id="GO:0015293">
    <property type="term" value="F:symporter activity"/>
    <property type="evidence" value="ECO:0007669"/>
    <property type="project" value="UniProtKB-KW"/>
</dbReference>
<dbReference type="CDD" id="cd17361">
    <property type="entry name" value="MFS_STP"/>
    <property type="match status" value="1"/>
</dbReference>
<dbReference type="FunFam" id="1.20.1250.20:FF:000002">
    <property type="entry name" value="Sugar transport protein 13"/>
    <property type="match status" value="1"/>
</dbReference>
<dbReference type="Gene3D" id="1.20.1250.20">
    <property type="entry name" value="MFS general substrate transporter like domains"/>
    <property type="match status" value="1"/>
</dbReference>
<dbReference type="InterPro" id="IPR020846">
    <property type="entry name" value="MFS_dom"/>
</dbReference>
<dbReference type="InterPro" id="IPR044778">
    <property type="entry name" value="MFS_STP/MST-like_plant"/>
</dbReference>
<dbReference type="InterPro" id="IPR005828">
    <property type="entry name" value="MFS_sugar_transport-like"/>
</dbReference>
<dbReference type="InterPro" id="IPR036259">
    <property type="entry name" value="MFS_trans_sf"/>
</dbReference>
<dbReference type="InterPro" id="IPR045262">
    <property type="entry name" value="STP/PLT_plant"/>
</dbReference>
<dbReference type="InterPro" id="IPR003663">
    <property type="entry name" value="Sugar/inositol_transpt"/>
</dbReference>
<dbReference type="InterPro" id="IPR005829">
    <property type="entry name" value="Sugar_transporter_CS"/>
</dbReference>
<dbReference type="NCBIfam" id="TIGR00879">
    <property type="entry name" value="SP"/>
    <property type="match status" value="1"/>
</dbReference>
<dbReference type="PANTHER" id="PTHR23500">
    <property type="entry name" value="SOLUTE CARRIER FAMILY 2, FACILITATED GLUCOSE TRANSPORTER"/>
    <property type="match status" value="1"/>
</dbReference>
<dbReference type="PANTHER" id="PTHR23500:SF545">
    <property type="entry name" value="SUGAR TRANSPORT PROTEIN MST2"/>
    <property type="match status" value="1"/>
</dbReference>
<dbReference type="Pfam" id="PF00083">
    <property type="entry name" value="Sugar_tr"/>
    <property type="match status" value="1"/>
</dbReference>
<dbReference type="PRINTS" id="PR00171">
    <property type="entry name" value="SUGRTRNSPORT"/>
</dbReference>
<dbReference type="SUPFAM" id="SSF103473">
    <property type="entry name" value="MFS general substrate transporter"/>
    <property type="match status" value="1"/>
</dbReference>
<dbReference type="PROSITE" id="PS50850">
    <property type="entry name" value="MFS"/>
    <property type="match status" value="1"/>
</dbReference>
<dbReference type="PROSITE" id="PS00216">
    <property type="entry name" value="SUGAR_TRANSPORT_1"/>
    <property type="match status" value="1"/>
</dbReference>
<proteinExistence type="evidence at transcript level"/>
<gene>
    <name evidence="3" type="primary">MST2</name>
    <name evidence="7" type="ordered locus">Os03g0594400</name>
    <name evidence="6" type="ordered locus">LOC_Os03g39710</name>
    <name evidence="8" type="ORF">OsJ_11618</name>
    <name evidence="5" type="ORF">OSJNBb0042N11.24</name>
</gene>
<feature type="chain" id="PRO_0000441036" description="Sugar transport protein MST2">
    <location>
        <begin position="1"/>
        <end position="522"/>
    </location>
</feature>
<feature type="topological domain" description="Cytoplasmic" evidence="4">
    <location>
        <begin position="1"/>
        <end position="24"/>
    </location>
</feature>
<feature type="transmembrane region" description="Helical" evidence="1">
    <location>
        <begin position="25"/>
        <end position="45"/>
    </location>
</feature>
<feature type="topological domain" description="Extracellular" evidence="4">
    <location>
        <begin position="46"/>
        <end position="82"/>
    </location>
</feature>
<feature type="transmembrane region" description="Helical" evidence="1">
    <location>
        <begin position="83"/>
        <end position="103"/>
    </location>
</feature>
<feature type="topological domain" description="Cytoplasmic" evidence="4">
    <location>
        <begin position="104"/>
        <end position="111"/>
    </location>
</feature>
<feature type="transmembrane region" description="Helical" evidence="1">
    <location>
        <begin position="112"/>
        <end position="132"/>
    </location>
</feature>
<feature type="topological domain" description="Extracellular" evidence="4">
    <location>
        <begin position="133"/>
        <end position="134"/>
    </location>
</feature>
<feature type="transmembrane region" description="Helical" evidence="1">
    <location>
        <begin position="135"/>
        <end position="155"/>
    </location>
</feature>
<feature type="topological domain" description="Cytoplasmic" evidence="4">
    <location>
        <begin position="156"/>
        <end position="169"/>
    </location>
</feature>
<feature type="transmembrane region" description="Helical" evidence="1">
    <location>
        <begin position="170"/>
        <end position="190"/>
    </location>
</feature>
<feature type="topological domain" description="Extracellular" evidence="4">
    <location>
        <begin position="191"/>
        <end position="204"/>
    </location>
</feature>
<feature type="transmembrane region" description="Helical" evidence="1">
    <location>
        <begin position="205"/>
        <end position="225"/>
    </location>
</feature>
<feature type="topological domain" description="Cytoplasmic" evidence="4">
    <location>
        <begin position="226"/>
        <end position="291"/>
    </location>
</feature>
<feature type="transmembrane region" description="Helical" evidence="1">
    <location>
        <begin position="292"/>
        <end position="312"/>
    </location>
</feature>
<feature type="topological domain" description="Extracellular" evidence="4">
    <location>
        <begin position="313"/>
        <end position="329"/>
    </location>
</feature>
<feature type="transmembrane region" description="Helical" evidence="1">
    <location>
        <begin position="330"/>
        <end position="350"/>
    </location>
</feature>
<feature type="topological domain" description="Cytoplasmic" evidence="4">
    <location>
        <begin position="351"/>
        <end position="361"/>
    </location>
</feature>
<feature type="transmembrane region" description="Helical" evidence="1">
    <location>
        <begin position="362"/>
        <end position="382"/>
    </location>
</feature>
<feature type="topological domain" description="Extracellular" evidence="4">
    <location>
        <begin position="383"/>
        <end position="391"/>
    </location>
</feature>
<feature type="transmembrane region" description="Helical" evidence="1">
    <location>
        <begin position="392"/>
        <end position="412"/>
    </location>
</feature>
<feature type="topological domain" description="Cytoplasmic" evidence="4">
    <location>
        <begin position="413"/>
        <end position="434"/>
    </location>
</feature>
<feature type="transmembrane region" description="Helical" evidence="1">
    <location>
        <begin position="435"/>
        <end position="455"/>
    </location>
</feature>
<feature type="topological domain" description="Extracellular" evidence="4">
    <location>
        <begin position="456"/>
        <end position="459"/>
    </location>
</feature>
<feature type="transmembrane region" description="Helical" evidence="1">
    <location>
        <begin position="460"/>
        <end position="480"/>
    </location>
</feature>
<feature type="topological domain" description="Cytoplasmic" evidence="4">
    <location>
        <begin position="481"/>
        <end position="522"/>
    </location>
</feature>
<comment type="function">
    <text evidence="2">Mediates active uptake of hexoses by sugar:proton symport. Can transport glucose.</text>
</comment>
<comment type="subcellular location">
    <subcellularLocation>
        <location evidence="1">Membrane</location>
        <topology evidence="1">Multi-pass membrane protein</topology>
    </subcellularLocation>
</comment>
<comment type="similarity">
    <text evidence="4">Belongs to the major facilitator superfamily. Sugar transporter (TC 2.A.1.1) family.</text>
</comment>
<keyword id="KW-0472">Membrane</keyword>
<keyword id="KW-1185">Reference proteome</keyword>
<keyword id="KW-0762">Sugar transport</keyword>
<keyword id="KW-0769">Symport</keyword>
<keyword id="KW-0812">Transmembrane</keyword>
<keyword id="KW-1133">Transmembrane helix</keyword>
<keyword id="KW-0813">Transport</keyword>